<dbReference type="EMBL" id="AF157835">
    <property type="protein sequence ID" value="AAF03990.1"/>
    <property type="molecule type" value="Genomic_DNA"/>
</dbReference>
<dbReference type="RefSeq" id="NP_051008.1">
    <property type="nucleotide sequence ID" value="NC_000935.1"/>
</dbReference>
<dbReference type="SMR" id="Q9T1Q1"/>
<dbReference type="KEGG" id="vg:1262341"/>
<dbReference type="Proteomes" id="UP000000853">
    <property type="component" value="Genome"/>
</dbReference>
<dbReference type="Gene3D" id="6.10.250.2700">
    <property type="match status" value="2"/>
</dbReference>
<dbReference type="SUPFAM" id="SSF47162">
    <property type="entry name" value="Apolipoprotein"/>
    <property type="match status" value="1"/>
</dbReference>
<sequence length="190" mass="20900">MGQVAFDALQASEELESAGISREKARAISLVVRKSHDVANVATKADIAEVKRDIADVRKDLSAEIADVRKDLSAEIADVRKDLSAEIADVRKDLSAEIADVRKDLSAEIADVRKDMAIRFEKTDAQIADVRKDMVNLFDKTDAQISLVRKDLQLEMSGIRAEQKLIRWMLGAGILGILSLVVKAFLMPAL</sequence>
<proteinExistence type="predicted"/>
<protein>
    <recommendedName>
        <fullName>Putative protein p47</fullName>
    </recommendedName>
</protein>
<organismHost>
    <name type="scientific">Escherichia coli</name>
    <dbReference type="NCBI Taxonomy" id="562"/>
</organismHost>
<name>VP47_BPAPS</name>
<accession>Q9T1Q1</accession>
<reference key="1">
    <citation type="journal article" date="1999" name="Virology">
        <title>Isolation and characterization of APSE-1, a bacteriophage infecting the secondary endosymbiont of acyrthosiphon pisum.</title>
        <authorList>
            <person name="van der Wilk F."/>
            <person name="Dullemans A.M."/>
            <person name="Verbeek M."/>
            <person name="van den Heuvel J.F.J.M."/>
        </authorList>
    </citation>
    <scope>NUCLEOTIDE SEQUENCE [LARGE SCALE GENOMIC DNA]</scope>
</reference>
<keyword id="KW-1185">Reference proteome</keyword>
<gene>
    <name type="primary">47</name>
</gene>
<feature type="chain" id="PRO_0000077872" description="Putative protein p47">
    <location>
        <begin position="1"/>
        <end position="190"/>
    </location>
</feature>
<organism>
    <name type="scientific">Acyrthosiphon pisum secondary endosymbiont phage 1</name>
    <name type="common">Bacteriophage APSE-1</name>
    <dbReference type="NCBI Taxonomy" id="2682836"/>
    <lineage>
        <taxon>Viruses</taxon>
        <taxon>Duplodnaviria</taxon>
        <taxon>Heunggongvirae</taxon>
        <taxon>Uroviricota</taxon>
        <taxon>Caudoviricetes</taxon>
        <taxon>Sendosyvirus</taxon>
        <taxon>Sendosyvirus APSE1</taxon>
    </lineage>
</organism>